<feature type="chain" id="PRO_0000235042" description="Serine hydroxymethyltransferase">
    <location>
        <begin position="1"/>
        <end position="407"/>
    </location>
</feature>
<feature type="binding site" evidence="2">
    <location>
        <position position="51"/>
    </location>
    <ligand>
        <name>pyridoxal 5'-phosphate</name>
        <dbReference type="ChEBI" id="CHEBI:597326"/>
    </ligand>
</feature>
<feature type="binding site" evidence="2">
    <location>
        <begin position="94"/>
        <end position="95"/>
    </location>
    <ligand>
        <name>pyridoxal 5'-phosphate</name>
        <dbReference type="ChEBI" id="CHEBI:597326"/>
    </ligand>
</feature>
<feature type="binding site" evidence="1">
    <location>
        <position position="117"/>
    </location>
    <ligand>
        <name>(6S)-5,6,7,8-tetrahydrofolate</name>
        <dbReference type="ChEBI" id="CHEBI:57453"/>
    </ligand>
</feature>
<feature type="binding site" evidence="1">
    <location>
        <begin position="121"/>
        <end position="123"/>
    </location>
    <ligand>
        <name>(6S)-5,6,7,8-tetrahydrofolate</name>
        <dbReference type="ChEBI" id="CHEBI:57453"/>
    </ligand>
</feature>
<feature type="binding site" evidence="2">
    <location>
        <position position="172"/>
    </location>
    <ligand>
        <name>pyridoxal 5'-phosphate</name>
        <dbReference type="ChEBI" id="CHEBI:597326"/>
    </ligand>
</feature>
<feature type="binding site" evidence="2">
    <location>
        <position position="200"/>
    </location>
    <ligand>
        <name>pyridoxal 5'-phosphate</name>
        <dbReference type="ChEBI" id="CHEBI:597326"/>
    </ligand>
</feature>
<feature type="binding site" evidence="2">
    <location>
        <position position="225"/>
    </location>
    <ligand>
        <name>pyridoxal 5'-phosphate</name>
        <dbReference type="ChEBI" id="CHEBI:597326"/>
    </ligand>
</feature>
<feature type="binding site" evidence="1">
    <location>
        <position position="242"/>
    </location>
    <ligand>
        <name>(6S)-5,6,7,8-tetrahydrofolate</name>
        <dbReference type="ChEBI" id="CHEBI:57453"/>
    </ligand>
</feature>
<feature type="binding site" evidence="2">
    <location>
        <position position="258"/>
    </location>
    <ligand>
        <name>pyridoxal 5'-phosphate</name>
        <dbReference type="ChEBI" id="CHEBI:597326"/>
    </ligand>
</feature>
<feature type="site" description="Plays an important role in substrate specificity" evidence="1">
    <location>
        <position position="225"/>
    </location>
</feature>
<feature type="modified residue" description="N6-(pyridoxal phosphate)lysine" evidence="1 2">
    <location>
        <position position="226"/>
    </location>
</feature>
<feature type="helix" evidence="4">
    <location>
        <begin position="9"/>
        <end position="23"/>
    </location>
</feature>
<feature type="strand" evidence="4">
    <location>
        <begin position="25"/>
        <end position="27"/>
    </location>
</feature>
<feature type="helix" evidence="4">
    <location>
        <begin position="37"/>
        <end position="43"/>
    </location>
</feature>
<feature type="helix" evidence="4">
    <location>
        <begin position="46"/>
        <end position="49"/>
    </location>
</feature>
<feature type="strand" evidence="4">
    <location>
        <begin position="58"/>
        <end position="62"/>
    </location>
</feature>
<feature type="helix" evidence="4">
    <location>
        <begin position="65"/>
        <end position="82"/>
    </location>
</feature>
<feature type="strand" evidence="4">
    <location>
        <begin position="85"/>
        <end position="88"/>
    </location>
</feature>
<feature type="helix" evidence="4">
    <location>
        <begin position="94"/>
        <end position="105"/>
    </location>
</feature>
<feature type="strand" evidence="4">
    <location>
        <begin position="111"/>
        <end position="115"/>
    </location>
</feature>
<feature type="helix" evidence="4">
    <location>
        <begin position="117"/>
        <end position="119"/>
    </location>
</feature>
<feature type="helix" evidence="4">
    <location>
        <begin position="123"/>
        <end position="125"/>
    </location>
</feature>
<feature type="helix" evidence="4">
    <location>
        <begin position="131"/>
        <end position="135"/>
    </location>
</feature>
<feature type="strand" evidence="4">
    <location>
        <begin position="136"/>
        <end position="141"/>
    </location>
</feature>
<feature type="turn" evidence="4">
    <location>
        <begin position="145"/>
        <end position="147"/>
    </location>
</feature>
<feature type="strand" evidence="5">
    <location>
        <begin position="148"/>
        <end position="150"/>
    </location>
</feature>
<feature type="helix" evidence="4">
    <location>
        <begin position="152"/>
        <end position="162"/>
    </location>
</feature>
<feature type="strand" evidence="4">
    <location>
        <begin position="165"/>
        <end position="169"/>
    </location>
</feature>
<feature type="helix" evidence="4">
    <location>
        <begin position="180"/>
        <end position="190"/>
    </location>
</feature>
<feature type="strand" evidence="4">
    <location>
        <begin position="193"/>
        <end position="197"/>
    </location>
</feature>
<feature type="turn" evidence="4">
    <location>
        <begin position="199"/>
        <end position="201"/>
    </location>
</feature>
<feature type="helix" evidence="4">
    <location>
        <begin position="202"/>
        <end position="206"/>
    </location>
</feature>
<feature type="turn" evidence="4">
    <location>
        <begin position="214"/>
        <end position="216"/>
    </location>
</feature>
<feature type="strand" evidence="4">
    <location>
        <begin position="218"/>
        <end position="225"/>
    </location>
</feature>
<feature type="helix" evidence="4">
    <location>
        <begin position="226"/>
        <end position="228"/>
    </location>
</feature>
<feature type="strand" evidence="4">
    <location>
        <begin position="234"/>
        <end position="239"/>
    </location>
</feature>
<feature type="helix" evidence="4">
    <location>
        <begin position="241"/>
        <end position="251"/>
    </location>
</feature>
<feature type="turn" evidence="4">
    <location>
        <begin position="252"/>
        <end position="255"/>
    </location>
</feature>
<feature type="helix" evidence="4">
    <location>
        <begin position="261"/>
        <end position="275"/>
    </location>
</feature>
<feature type="helix" evidence="4">
    <location>
        <begin position="277"/>
        <end position="299"/>
    </location>
</feature>
<feature type="helix" evidence="4">
    <location>
        <begin position="305"/>
        <end position="307"/>
    </location>
</feature>
<feature type="strand" evidence="4">
    <location>
        <begin position="310"/>
        <end position="317"/>
    </location>
</feature>
<feature type="helix" evidence="4">
    <location>
        <begin position="319"/>
        <end position="321"/>
    </location>
</feature>
<feature type="helix" evidence="4">
    <location>
        <begin position="325"/>
        <end position="334"/>
    </location>
</feature>
<feature type="turn" evidence="4">
    <location>
        <begin position="351"/>
        <end position="353"/>
    </location>
</feature>
<feature type="strand" evidence="4">
    <location>
        <begin position="355"/>
        <end position="360"/>
    </location>
</feature>
<feature type="helix" evidence="4">
    <location>
        <begin position="362"/>
        <end position="366"/>
    </location>
</feature>
<feature type="helix" evidence="4">
    <location>
        <begin position="371"/>
        <end position="373"/>
    </location>
</feature>
<feature type="helix" evidence="4">
    <location>
        <begin position="374"/>
        <end position="387"/>
    </location>
</feature>
<feature type="helix" evidence="4">
    <location>
        <begin position="391"/>
        <end position="402"/>
    </location>
</feature>
<gene>
    <name evidence="1" type="primary">glyA</name>
    <name type="ordered locus">TTHA1524</name>
</gene>
<comment type="function">
    <text evidence="1">Catalyzes the reversible interconversion of serine and glycine with tetrahydrofolate (THF) serving as the one-carbon carrier. This reaction serves as the major source of one-carbon groups required for the biosynthesis of purines, thymidylate, methionine, and other important biomolecules. Also exhibits THF-independent aldolase activity toward beta-hydroxyamino acids, producing glycine and aldehydes, via a retro-aldol mechanism.</text>
</comment>
<comment type="catalytic activity">
    <reaction evidence="1">
        <text>(6R)-5,10-methylene-5,6,7,8-tetrahydrofolate + glycine + H2O = (6S)-5,6,7,8-tetrahydrofolate + L-serine</text>
        <dbReference type="Rhea" id="RHEA:15481"/>
        <dbReference type="ChEBI" id="CHEBI:15377"/>
        <dbReference type="ChEBI" id="CHEBI:15636"/>
        <dbReference type="ChEBI" id="CHEBI:33384"/>
        <dbReference type="ChEBI" id="CHEBI:57305"/>
        <dbReference type="ChEBI" id="CHEBI:57453"/>
        <dbReference type="EC" id="2.1.2.1"/>
    </reaction>
</comment>
<comment type="cofactor">
    <cofactor evidence="1">
        <name>pyridoxal 5'-phosphate</name>
        <dbReference type="ChEBI" id="CHEBI:597326"/>
    </cofactor>
</comment>
<comment type="pathway">
    <text evidence="1">One-carbon metabolism; tetrahydrofolate interconversion.</text>
</comment>
<comment type="pathway">
    <text evidence="1">Amino-acid biosynthesis; glycine biosynthesis; glycine from L-serine: step 1/1.</text>
</comment>
<comment type="subunit">
    <text evidence="1 2">Homodimer.</text>
</comment>
<comment type="subcellular location">
    <subcellularLocation>
        <location evidence="1">Cytoplasm</location>
    </subcellularLocation>
</comment>
<comment type="similarity">
    <text evidence="1 3">Belongs to the SHMT family.</text>
</comment>
<dbReference type="EC" id="2.1.2.1" evidence="1"/>
<dbReference type="EMBL" id="AP008226">
    <property type="protein sequence ID" value="BAD71347.1"/>
    <property type="molecule type" value="Genomic_DNA"/>
</dbReference>
<dbReference type="RefSeq" id="WP_011228734.1">
    <property type="nucleotide sequence ID" value="NC_006461.1"/>
</dbReference>
<dbReference type="RefSeq" id="YP_144790.1">
    <property type="nucleotide sequence ID" value="NC_006461.1"/>
</dbReference>
<dbReference type="PDB" id="2DKJ">
    <property type="method" value="X-ray"/>
    <property type="resolution" value="1.15 A"/>
    <property type="chains" value="A/B=1-407"/>
</dbReference>
<dbReference type="PDB" id="8SSY">
    <property type="method" value="X-ray"/>
    <property type="resolution" value="1.80 A"/>
    <property type="chains" value="A/B=3-407"/>
</dbReference>
<dbReference type="PDB" id="8SUI">
    <property type="method" value="Other"/>
    <property type="resolution" value="2.30 A"/>
    <property type="chains" value="A/B=3-407"/>
</dbReference>
<dbReference type="PDB" id="8SUJ">
    <property type="method" value="Other"/>
    <property type="resolution" value="2.30 A"/>
    <property type="chains" value="A/B=3-407"/>
</dbReference>
<dbReference type="PDB" id="9BOH">
    <property type="method" value="X-ray"/>
    <property type="resolution" value="2.00 A"/>
    <property type="chains" value="A/B=6-407"/>
</dbReference>
<dbReference type="PDB" id="9BOW">
    <property type="method" value="X-ray"/>
    <property type="resolution" value="1.80 A"/>
    <property type="chains" value="A/B=6-407"/>
</dbReference>
<dbReference type="PDB" id="9BPE">
    <property type="method" value="Other"/>
    <property type="resolution" value="2.30 A"/>
    <property type="chains" value="A/B=6-407"/>
</dbReference>
<dbReference type="PDBsum" id="2DKJ"/>
<dbReference type="PDBsum" id="8SSY"/>
<dbReference type="PDBsum" id="8SUI"/>
<dbReference type="PDBsum" id="8SUJ"/>
<dbReference type="PDBsum" id="9BOH"/>
<dbReference type="PDBsum" id="9BOW"/>
<dbReference type="PDBsum" id="9BPE"/>
<dbReference type="SMR" id="Q5SI56"/>
<dbReference type="EnsemblBacteria" id="BAD71347">
    <property type="protein sequence ID" value="BAD71347"/>
    <property type="gene ID" value="BAD71347"/>
</dbReference>
<dbReference type="GeneID" id="3169745"/>
<dbReference type="KEGG" id="ttj:TTHA1524"/>
<dbReference type="PATRIC" id="fig|300852.9.peg.1499"/>
<dbReference type="eggNOG" id="COG0112">
    <property type="taxonomic scope" value="Bacteria"/>
</dbReference>
<dbReference type="HOGENOM" id="CLU_022477_2_1_0"/>
<dbReference type="PhylomeDB" id="Q5SI56"/>
<dbReference type="BRENDA" id="2.1.2.1">
    <property type="organism ID" value="2305"/>
</dbReference>
<dbReference type="UniPathway" id="UPA00193"/>
<dbReference type="UniPathway" id="UPA00288">
    <property type="reaction ID" value="UER01023"/>
</dbReference>
<dbReference type="EvolutionaryTrace" id="Q5SI56"/>
<dbReference type="Proteomes" id="UP000000532">
    <property type="component" value="Chromosome"/>
</dbReference>
<dbReference type="GO" id="GO:0005829">
    <property type="term" value="C:cytosol"/>
    <property type="evidence" value="ECO:0007669"/>
    <property type="project" value="TreeGrafter"/>
</dbReference>
<dbReference type="GO" id="GO:0004372">
    <property type="term" value="F:glycine hydroxymethyltransferase activity"/>
    <property type="evidence" value="ECO:0007669"/>
    <property type="project" value="UniProtKB-UniRule"/>
</dbReference>
<dbReference type="GO" id="GO:0030170">
    <property type="term" value="F:pyridoxal phosphate binding"/>
    <property type="evidence" value="ECO:0007669"/>
    <property type="project" value="UniProtKB-UniRule"/>
</dbReference>
<dbReference type="GO" id="GO:0019264">
    <property type="term" value="P:glycine biosynthetic process from serine"/>
    <property type="evidence" value="ECO:0007669"/>
    <property type="project" value="UniProtKB-UniRule"/>
</dbReference>
<dbReference type="GO" id="GO:0035999">
    <property type="term" value="P:tetrahydrofolate interconversion"/>
    <property type="evidence" value="ECO:0007669"/>
    <property type="project" value="UniProtKB-UniRule"/>
</dbReference>
<dbReference type="CDD" id="cd00378">
    <property type="entry name" value="SHMT"/>
    <property type="match status" value="1"/>
</dbReference>
<dbReference type="FunFam" id="3.40.640.10:FF:000001">
    <property type="entry name" value="Serine hydroxymethyltransferase"/>
    <property type="match status" value="1"/>
</dbReference>
<dbReference type="Gene3D" id="3.90.1150.10">
    <property type="entry name" value="Aspartate Aminotransferase, domain 1"/>
    <property type="match status" value="1"/>
</dbReference>
<dbReference type="Gene3D" id="3.40.640.10">
    <property type="entry name" value="Type I PLP-dependent aspartate aminotransferase-like (Major domain)"/>
    <property type="match status" value="1"/>
</dbReference>
<dbReference type="HAMAP" id="MF_00051">
    <property type="entry name" value="SHMT"/>
    <property type="match status" value="1"/>
</dbReference>
<dbReference type="InterPro" id="IPR015424">
    <property type="entry name" value="PyrdxlP-dep_Trfase"/>
</dbReference>
<dbReference type="InterPro" id="IPR015421">
    <property type="entry name" value="PyrdxlP-dep_Trfase_major"/>
</dbReference>
<dbReference type="InterPro" id="IPR015422">
    <property type="entry name" value="PyrdxlP-dep_Trfase_small"/>
</dbReference>
<dbReference type="InterPro" id="IPR001085">
    <property type="entry name" value="Ser_HO-MeTrfase"/>
</dbReference>
<dbReference type="InterPro" id="IPR049943">
    <property type="entry name" value="Ser_HO-MeTrfase-like"/>
</dbReference>
<dbReference type="InterPro" id="IPR019798">
    <property type="entry name" value="Ser_HO-MeTrfase_PLP_BS"/>
</dbReference>
<dbReference type="InterPro" id="IPR039429">
    <property type="entry name" value="SHMT-like_dom"/>
</dbReference>
<dbReference type="NCBIfam" id="NF000586">
    <property type="entry name" value="PRK00011.1"/>
    <property type="match status" value="1"/>
</dbReference>
<dbReference type="PANTHER" id="PTHR11680">
    <property type="entry name" value="SERINE HYDROXYMETHYLTRANSFERASE"/>
    <property type="match status" value="1"/>
</dbReference>
<dbReference type="PANTHER" id="PTHR11680:SF35">
    <property type="entry name" value="SERINE HYDROXYMETHYLTRANSFERASE 1"/>
    <property type="match status" value="1"/>
</dbReference>
<dbReference type="Pfam" id="PF00464">
    <property type="entry name" value="SHMT"/>
    <property type="match status" value="1"/>
</dbReference>
<dbReference type="PIRSF" id="PIRSF000412">
    <property type="entry name" value="SHMT"/>
    <property type="match status" value="1"/>
</dbReference>
<dbReference type="SUPFAM" id="SSF53383">
    <property type="entry name" value="PLP-dependent transferases"/>
    <property type="match status" value="1"/>
</dbReference>
<dbReference type="PROSITE" id="PS00096">
    <property type="entry name" value="SHMT"/>
    <property type="match status" value="1"/>
</dbReference>
<evidence type="ECO:0000255" key="1">
    <source>
        <dbReference type="HAMAP-Rule" id="MF_00051"/>
    </source>
</evidence>
<evidence type="ECO:0000269" key="2">
    <source ref="2"/>
</evidence>
<evidence type="ECO:0000305" key="3"/>
<evidence type="ECO:0007829" key="4">
    <source>
        <dbReference type="PDB" id="2DKJ"/>
    </source>
</evidence>
<evidence type="ECO:0007829" key="5">
    <source>
        <dbReference type="PDB" id="8SSY"/>
    </source>
</evidence>
<protein>
    <recommendedName>
        <fullName evidence="1">Serine hydroxymethyltransferase</fullName>
        <shortName evidence="1">SHMT</shortName>
        <shortName evidence="1">Serine methylase</shortName>
        <ecNumber evidence="1">2.1.2.1</ecNumber>
    </recommendedName>
</protein>
<accession>Q5SI56</accession>
<keyword id="KW-0002">3D-structure</keyword>
<keyword id="KW-0028">Amino-acid biosynthesis</keyword>
<keyword id="KW-0963">Cytoplasm</keyword>
<keyword id="KW-0554">One-carbon metabolism</keyword>
<keyword id="KW-0663">Pyridoxal phosphate</keyword>
<keyword id="KW-1185">Reference proteome</keyword>
<keyword id="KW-0808">Transferase</keyword>
<reference key="1">
    <citation type="submission" date="2004-11" db="EMBL/GenBank/DDBJ databases">
        <title>Complete genome sequence of Thermus thermophilus HB8.</title>
        <authorList>
            <person name="Masui R."/>
            <person name="Kurokawa K."/>
            <person name="Nakagawa N."/>
            <person name="Tokunaga F."/>
            <person name="Koyama Y."/>
            <person name="Shibata T."/>
            <person name="Oshima T."/>
            <person name="Yokoyama S."/>
            <person name="Yasunaga T."/>
            <person name="Kuramitsu S."/>
        </authorList>
    </citation>
    <scope>NUCLEOTIDE SEQUENCE [LARGE SCALE GENOMIC DNA]</scope>
    <source>
        <strain>ATCC 27634 / DSM 579 / HB8</strain>
    </source>
</reference>
<reference key="2">
    <citation type="submission" date="2011-07" db="PDB data bank">
        <title>Crystal structure of t.th.hb8 serine hydroxymethyltransferase.</title>
        <authorList>
            <consortium name="RIKEN structural genomics initiative (RSGI)"/>
        </authorList>
    </citation>
    <scope>X-RAY CRYSTALLOGRAPHY (1.15 ANGSTROMS) IN COMPLEX WITH PYRIDOXAL PHOSPHATE</scope>
    <scope>SUBUNIT</scope>
</reference>
<proteinExistence type="evidence at protein level"/>
<sequence>MVSTLKRDEALFELIALEEKRQREGLELIASENFVSKQVREAVGSVLTNKYAEGYPGARYYGGCEVIDRVESLAIERAKALFGAAWANVQPHSGSQANMAVYMALMEPGDTLMGMDLAAGGHLTHGSRVNFSGKLYKVVSYGVRPDTELIDLEEVRRLALEHRPKVIVAGASAYPRFWDFKAFREIADEVGAYLVVDMAHFAGLVAAGLHPNPLPYAHVVTSTTHKTLRGPRGGLILSNDPELGKRIDKLIFPGIQGGPLEHVIAGKAVAFFEALQPEFKEYSRLVVENAKRLAEELARRGYRIVTGGTDNHLFLVDLRPKGLTGKEAEERLDAVGITVNKNAIPFDPKPPRVTSGIRIGTPAITTRGFTPEEMPLVAELIDRALLEGPSEALREEVRRLALAHPMP</sequence>
<name>GLYA_THET8</name>
<organism>
    <name type="scientific">Thermus thermophilus (strain ATCC 27634 / DSM 579 / HB8)</name>
    <dbReference type="NCBI Taxonomy" id="300852"/>
    <lineage>
        <taxon>Bacteria</taxon>
        <taxon>Thermotogati</taxon>
        <taxon>Deinococcota</taxon>
        <taxon>Deinococci</taxon>
        <taxon>Thermales</taxon>
        <taxon>Thermaceae</taxon>
        <taxon>Thermus</taxon>
    </lineage>
</organism>